<reference key="1">
    <citation type="journal article" date="2002" name="Nature">
        <title>Sequence and analysis of chromosome 2 of Dictyostelium discoideum.</title>
        <authorList>
            <person name="Gloeckner G."/>
            <person name="Eichinger L."/>
            <person name="Szafranski K."/>
            <person name="Pachebat J.A."/>
            <person name="Bankier A.T."/>
            <person name="Dear P.H."/>
            <person name="Lehmann R."/>
            <person name="Baumgart C."/>
            <person name="Parra G."/>
            <person name="Abril J.F."/>
            <person name="Guigo R."/>
            <person name="Kumpf K."/>
            <person name="Tunggal B."/>
            <person name="Cox E.C."/>
            <person name="Quail M.A."/>
            <person name="Platzer M."/>
            <person name="Rosenthal A."/>
            <person name="Noegel A.A."/>
        </authorList>
    </citation>
    <scope>NUCLEOTIDE SEQUENCE [LARGE SCALE GENOMIC DNA]</scope>
    <source>
        <strain>AX4</strain>
    </source>
</reference>
<reference key="2">
    <citation type="journal article" date="2005" name="Nature">
        <title>The genome of the social amoeba Dictyostelium discoideum.</title>
        <authorList>
            <person name="Eichinger L."/>
            <person name="Pachebat J.A."/>
            <person name="Gloeckner G."/>
            <person name="Rajandream M.A."/>
            <person name="Sucgang R."/>
            <person name="Berriman M."/>
            <person name="Song J."/>
            <person name="Olsen R."/>
            <person name="Szafranski K."/>
            <person name="Xu Q."/>
            <person name="Tunggal B."/>
            <person name="Kummerfeld S."/>
            <person name="Madera M."/>
            <person name="Konfortov B.A."/>
            <person name="Rivero F."/>
            <person name="Bankier A.T."/>
            <person name="Lehmann R."/>
            <person name="Hamlin N."/>
            <person name="Davies R."/>
            <person name="Gaudet P."/>
            <person name="Fey P."/>
            <person name="Pilcher K."/>
            <person name="Chen G."/>
            <person name="Saunders D."/>
            <person name="Sodergren E.J."/>
            <person name="Davis P."/>
            <person name="Kerhornou A."/>
            <person name="Nie X."/>
            <person name="Hall N."/>
            <person name="Anjard C."/>
            <person name="Hemphill L."/>
            <person name="Bason N."/>
            <person name="Farbrother P."/>
            <person name="Desany B."/>
            <person name="Just E."/>
            <person name="Morio T."/>
            <person name="Rost R."/>
            <person name="Churcher C.M."/>
            <person name="Cooper J."/>
            <person name="Haydock S."/>
            <person name="van Driessche N."/>
            <person name="Cronin A."/>
            <person name="Goodhead I."/>
            <person name="Muzny D.M."/>
            <person name="Mourier T."/>
            <person name="Pain A."/>
            <person name="Lu M."/>
            <person name="Harper D."/>
            <person name="Lindsay R."/>
            <person name="Hauser H."/>
            <person name="James K.D."/>
            <person name="Quiles M."/>
            <person name="Madan Babu M."/>
            <person name="Saito T."/>
            <person name="Buchrieser C."/>
            <person name="Wardroper A."/>
            <person name="Felder M."/>
            <person name="Thangavelu M."/>
            <person name="Johnson D."/>
            <person name="Knights A."/>
            <person name="Loulseged H."/>
            <person name="Mungall K.L."/>
            <person name="Oliver K."/>
            <person name="Price C."/>
            <person name="Quail M.A."/>
            <person name="Urushihara H."/>
            <person name="Hernandez J."/>
            <person name="Rabbinowitsch E."/>
            <person name="Steffen D."/>
            <person name="Sanders M."/>
            <person name="Ma J."/>
            <person name="Kohara Y."/>
            <person name="Sharp S."/>
            <person name="Simmonds M.N."/>
            <person name="Spiegler S."/>
            <person name="Tivey A."/>
            <person name="Sugano S."/>
            <person name="White B."/>
            <person name="Walker D."/>
            <person name="Woodward J.R."/>
            <person name="Winckler T."/>
            <person name="Tanaka Y."/>
            <person name="Shaulsky G."/>
            <person name="Schleicher M."/>
            <person name="Weinstock G.M."/>
            <person name="Rosenthal A."/>
            <person name="Cox E.C."/>
            <person name="Chisholm R.L."/>
            <person name="Gibbs R.A."/>
            <person name="Loomis W.F."/>
            <person name="Platzer M."/>
            <person name="Kay R.R."/>
            <person name="Williams J.G."/>
            <person name="Dear P.H."/>
            <person name="Noegel A.A."/>
            <person name="Barrell B.G."/>
            <person name="Kuspa A."/>
        </authorList>
    </citation>
    <scope>NUCLEOTIDE SEQUENCE [LARGE SCALE GENOMIC DNA]</scope>
    <source>
        <strain>AX4</strain>
    </source>
</reference>
<comment type="cofactor">
    <cofactor evidence="1">
        <name>heme</name>
        <dbReference type="ChEBI" id="CHEBI:30413"/>
    </cofactor>
</comment>
<comment type="subcellular location">
    <subcellularLocation>
        <location evidence="3">Membrane</location>
        <topology evidence="3">Single-pass membrane protein</topology>
    </subcellularLocation>
</comment>
<comment type="similarity">
    <text evidence="3">Belongs to the cytochrome P450 family.</text>
</comment>
<comment type="caution">
    <text evidence="3">The gene for this protein is duplicated in strains AX3 and AX4. These strains contain a duplication of a segment of 750 kb of chromosome 2 compared to the corresponding sequence in strain AX2.</text>
</comment>
<name>C5082_DICDI</name>
<evidence type="ECO:0000250" key="1"/>
<evidence type="ECO:0000255" key="2"/>
<evidence type="ECO:0000305" key="3"/>
<keyword id="KW-0349">Heme</keyword>
<keyword id="KW-0408">Iron</keyword>
<keyword id="KW-0472">Membrane</keyword>
<keyword id="KW-0479">Metal-binding</keyword>
<keyword id="KW-0503">Monooxygenase</keyword>
<keyword id="KW-0560">Oxidoreductase</keyword>
<keyword id="KW-1185">Reference proteome</keyword>
<keyword id="KW-0812">Transmembrane</keyword>
<keyword id="KW-1133">Transmembrane helix</keyword>
<proteinExistence type="inferred from homology"/>
<organism>
    <name type="scientific">Dictyostelium discoideum</name>
    <name type="common">Social amoeba</name>
    <dbReference type="NCBI Taxonomy" id="44689"/>
    <lineage>
        <taxon>Eukaryota</taxon>
        <taxon>Amoebozoa</taxon>
        <taxon>Evosea</taxon>
        <taxon>Eumycetozoa</taxon>
        <taxon>Dictyostelia</taxon>
        <taxon>Dictyosteliales</taxon>
        <taxon>Dictyosteliaceae</taxon>
        <taxon>Dictyostelium</taxon>
    </lineage>
</organism>
<gene>
    <name type="primary">cyp508A2-1</name>
    <name type="ORF">DDB_G0272604</name>
</gene>
<gene>
    <name type="primary">cyp508A2-2</name>
    <name type="ORF">DDB_G0273945</name>
</gene>
<feature type="chain" id="PRO_0000318807" description="Probable cytochrome P450 508A2">
    <location>
        <begin position="1"/>
        <end position="493"/>
    </location>
</feature>
<feature type="transmembrane region" description="Helical" evidence="2">
    <location>
        <begin position="1"/>
        <end position="21"/>
    </location>
</feature>
<feature type="binding site" description="axial binding residue" evidence="1">
    <location>
        <position position="439"/>
    </location>
    <ligand>
        <name>heme</name>
        <dbReference type="ChEBI" id="CHEBI:30413"/>
    </ligand>
    <ligandPart>
        <name>Fe</name>
        <dbReference type="ChEBI" id="CHEBI:18248"/>
    </ligandPart>
</feature>
<accession>Q556M4</accession>
<accession>Q86AL5</accession>
<protein>
    <recommendedName>
        <fullName>Probable cytochrome P450 508A2</fullName>
        <ecNumber>1.14.-.-</ecNumber>
    </recommendedName>
</protein>
<dbReference type="EC" id="1.14.-.-"/>
<dbReference type="EMBL" id="AAFI02000011">
    <property type="protein sequence ID" value="EAL70406.1"/>
    <property type="molecule type" value="Genomic_DNA"/>
</dbReference>
<dbReference type="EMBL" id="AAFI02000009">
    <property type="protein sequence ID" value="EAL70939.1"/>
    <property type="molecule type" value="Genomic_DNA"/>
</dbReference>
<dbReference type="RefSeq" id="XP_644331.1">
    <property type="nucleotide sequence ID" value="XM_639239.1"/>
</dbReference>
<dbReference type="RefSeq" id="XP_645083.1">
    <property type="nucleotide sequence ID" value="XM_639991.1"/>
</dbReference>
<dbReference type="SMR" id="Q556M4"/>
<dbReference type="FunCoup" id="Q556M4">
    <property type="interactions" value="9"/>
</dbReference>
<dbReference type="STRING" id="44689.Q556M4"/>
<dbReference type="PaxDb" id="44689-DDB0232345"/>
<dbReference type="EnsemblProtists" id="EAL70406">
    <property type="protein sequence ID" value="EAL70406"/>
    <property type="gene ID" value="DDB_G0273945"/>
</dbReference>
<dbReference type="EnsemblProtists" id="EAL70939">
    <property type="protein sequence ID" value="EAL70939"/>
    <property type="gene ID" value="DDB_G0272604"/>
</dbReference>
<dbReference type="GeneID" id="8618757"/>
<dbReference type="GeneID" id="8619219"/>
<dbReference type="KEGG" id="ddi:DDB_G0272604"/>
<dbReference type="KEGG" id="ddi:DDB_G0273945"/>
<dbReference type="dictyBase" id="DDB_G0272604">
    <property type="gene designation" value="cyp508A2-1"/>
</dbReference>
<dbReference type="dictyBase" id="DDB_G0273945">
    <property type="gene designation" value="cyp508A2-2"/>
</dbReference>
<dbReference type="VEuPathDB" id="AmoebaDB:DDB_G0273945"/>
<dbReference type="eggNOG" id="KOG0156">
    <property type="taxonomic scope" value="Eukaryota"/>
</dbReference>
<dbReference type="HOGENOM" id="CLU_001570_4_0_1"/>
<dbReference type="InParanoid" id="Q556M4"/>
<dbReference type="OMA" id="ICGITMS"/>
<dbReference type="PhylomeDB" id="Q556M4"/>
<dbReference type="Reactome" id="R-DDI-211935">
    <property type="pathway name" value="Fatty acids"/>
</dbReference>
<dbReference type="Reactome" id="R-DDI-211945">
    <property type="pathway name" value="Phase I - Functionalization of compounds"/>
</dbReference>
<dbReference type="Reactome" id="R-DDI-211958">
    <property type="pathway name" value="Miscellaneous substrates"/>
</dbReference>
<dbReference type="Reactome" id="R-DDI-211981">
    <property type="pathway name" value="Xenobiotics"/>
</dbReference>
<dbReference type="Reactome" id="R-DDI-211999">
    <property type="pathway name" value="CYP2E1 reactions"/>
</dbReference>
<dbReference type="Reactome" id="R-DDI-2142670">
    <property type="pathway name" value="Synthesis of epoxy (EET) and dihydroxyeicosatrienoic acids (DHET)"/>
</dbReference>
<dbReference type="Reactome" id="R-DDI-2142816">
    <property type="pathway name" value="Synthesis of (16-20)-hydroxyeicosatetraenoic acids (HETE)"/>
</dbReference>
<dbReference type="Reactome" id="R-DDI-5423646">
    <property type="pathway name" value="Aflatoxin activation and detoxification"/>
</dbReference>
<dbReference type="Reactome" id="R-DDI-9027307">
    <property type="pathway name" value="Biosynthesis of maresin-like SPMs"/>
</dbReference>
<dbReference type="Reactome" id="R-DDI-9749641">
    <property type="pathway name" value="Aspirin ADME"/>
</dbReference>
<dbReference type="Reactome" id="R-DDI-9753281">
    <property type="pathway name" value="Paracetamol ADME"/>
</dbReference>
<dbReference type="PRO" id="PR:Q556M4"/>
<dbReference type="Proteomes" id="UP000002195">
    <property type="component" value="Chromosome 2"/>
</dbReference>
<dbReference type="GO" id="GO:0016020">
    <property type="term" value="C:membrane"/>
    <property type="evidence" value="ECO:0007669"/>
    <property type="project" value="UniProtKB-SubCell"/>
</dbReference>
<dbReference type="GO" id="GO:0020037">
    <property type="term" value="F:heme binding"/>
    <property type="evidence" value="ECO:0007669"/>
    <property type="project" value="InterPro"/>
</dbReference>
<dbReference type="GO" id="GO:0005506">
    <property type="term" value="F:iron ion binding"/>
    <property type="evidence" value="ECO:0007669"/>
    <property type="project" value="InterPro"/>
</dbReference>
<dbReference type="GO" id="GO:0004497">
    <property type="term" value="F:monooxygenase activity"/>
    <property type="evidence" value="ECO:0007669"/>
    <property type="project" value="UniProtKB-KW"/>
</dbReference>
<dbReference type="GO" id="GO:0016705">
    <property type="term" value="F:oxidoreductase activity, acting on paired donors, with incorporation or reduction of molecular oxygen"/>
    <property type="evidence" value="ECO:0007669"/>
    <property type="project" value="InterPro"/>
</dbReference>
<dbReference type="CDD" id="cd20617">
    <property type="entry name" value="CYP1_2-like"/>
    <property type="match status" value="1"/>
</dbReference>
<dbReference type="FunFam" id="1.10.630.10:FF:000068">
    <property type="entry name" value="Probable cytochrome P450 508A2"/>
    <property type="match status" value="1"/>
</dbReference>
<dbReference type="Gene3D" id="1.10.630.10">
    <property type="entry name" value="Cytochrome P450"/>
    <property type="match status" value="1"/>
</dbReference>
<dbReference type="InterPro" id="IPR001128">
    <property type="entry name" value="Cyt_P450"/>
</dbReference>
<dbReference type="InterPro" id="IPR017972">
    <property type="entry name" value="Cyt_P450_CS"/>
</dbReference>
<dbReference type="InterPro" id="IPR002401">
    <property type="entry name" value="Cyt_P450_E_grp-I"/>
</dbReference>
<dbReference type="InterPro" id="IPR036396">
    <property type="entry name" value="Cyt_P450_sf"/>
</dbReference>
<dbReference type="PANTHER" id="PTHR24303:SF31">
    <property type="entry name" value="CYTOCHROME P450 307A1-RELATED"/>
    <property type="match status" value="1"/>
</dbReference>
<dbReference type="PANTHER" id="PTHR24303">
    <property type="entry name" value="HEME-BINDING MONOOXYGENASE FAMILY"/>
    <property type="match status" value="1"/>
</dbReference>
<dbReference type="Pfam" id="PF00067">
    <property type="entry name" value="p450"/>
    <property type="match status" value="1"/>
</dbReference>
<dbReference type="PRINTS" id="PR00463">
    <property type="entry name" value="EP450I"/>
</dbReference>
<dbReference type="PRINTS" id="PR00385">
    <property type="entry name" value="P450"/>
</dbReference>
<dbReference type="SUPFAM" id="SSF48264">
    <property type="entry name" value="Cytochrome P450"/>
    <property type="match status" value="1"/>
</dbReference>
<dbReference type="PROSITE" id="PS00086">
    <property type="entry name" value="CYTOCHROME_P450"/>
    <property type="match status" value="1"/>
</dbReference>
<sequence length="493" mass="56819">MIFGIIVYLFLIYILHNAYSKYKRLNENQLPGPFPIPILGNIYQLTNLPHFDLTKMSEKYGKIFRIYLADLYTVIVCDPIIARELFVDKFDNFIDRPKIPSVKHGTFYHGTVASMGDNWKNNKEIVGKAMRKTNLKHIYQLLDDQVDVLIESMRTIESSGETFDPRYYLTKFTMSAMFKYIFNEDISKDEDVHNGQLAQLMKPMQKVFKDFGTGSLFDVLEITRPLYFLYLEWFTSHYYQVINFGKMKIYKHLETYKPDVQRDLMDLLIKEYGTETDDQILSISATVSDFFLAGVDTSATSLELIVMMLINYPEYQEKAYNEIKSALSSNGGGGGGGLTQRNKVLLSDRQSTPFVVSLFKETLRYKPISPFGLPRSTTSDIILNNGQFIPKNAQILINYHALSRNEEYFENPNQFDPTRFLNSDSNPAFMPFSIGPRNCVGSNFAQDEIYIALSNMILNFKFKSIDGKPVDETQTYGLTLKPNPFKVILEKRK</sequence>